<sequence>MTKSELVAQLALRFPQLVLKDADFAVKTMLDAMSDALSKGHRIEIRGFGSFGLNRRPARVGRNPKSGEKVQVPEKFVPHFKPGKELRERVDGRAGEPLKADDPDDER</sequence>
<keyword id="KW-0233">DNA recombination</keyword>
<keyword id="KW-0238">DNA-binding</keyword>
<keyword id="KW-0804">Transcription</keyword>
<keyword id="KW-0805">Transcription regulation</keyword>
<keyword id="KW-0810">Translation regulation</keyword>
<reference key="1">
    <citation type="submission" date="2008-04" db="EMBL/GenBank/DDBJ databases">
        <title>Complete sequence of chromosome 1 of Burkholderia ambifaria MC40-6.</title>
        <authorList>
            <person name="Copeland A."/>
            <person name="Lucas S."/>
            <person name="Lapidus A."/>
            <person name="Glavina del Rio T."/>
            <person name="Dalin E."/>
            <person name="Tice H."/>
            <person name="Pitluck S."/>
            <person name="Chain P."/>
            <person name="Malfatti S."/>
            <person name="Shin M."/>
            <person name="Vergez L."/>
            <person name="Lang D."/>
            <person name="Schmutz J."/>
            <person name="Larimer F."/>
            <person name="Land M."/>
            <person name="Hauser L."/>
            <person name="Kyrpides N."/>
            <person name="Lykidis A."/>
            <person name="Ramette A."/>
            <person name="Konstantinidis K."/>
            <person name="Tiedje J."/>
            <person name="Richardson P."/>
        </authorList>
    </citation>
    <scope>NUCLEOTIDE SEQUENCE [LARGE SCALE GENOMIC DNA]</scope>
    <source>
        <strain>MC40-6</strain>
    </source>
</reference>
<accession>B1YV36</accession>
<name>IHFB_BURA4</name>
<feature type="chain" id="PRO_1000122187" description="Integration host factor subunit beta">
    <location>
        <begin position="1"/>
        <end position="107"/>
    </location>
</feature>
<feature type="region of interest" description="Disordered" evidence="2">
    <location>
        <begin position="56"/>
        <end position="107"/>
    </location>
</feature>
<feature type="compositionally biased region" description="Basic and acidic residues" evidence="2">
    <location>
        <begin position="82"/>
        <end position="101"/>
    </location>
</feature>
<dbReference type="EMBL" id="CP001025">
    <property type="protein sequence ID" value="ACB63419.1"/>
    <property type="molecule type" value="Genomic_DNA"/>
</dbReference>
<dbReference type="RefSeq" id="WP_006750752.1">
    <property type="nucleotide sequence ID" value="NC_010551.1"/>
</dbReference>
<dbReference type="SMR" id="B1YV36"/>
<dbReference type="KEGG" id="bac:BamMC406_0928"/>
<dbReference type="HOGENOM" id="CLU_105066_2_0_4"/>
<dbReference type="OrthoDB" id="9804203at2"/>
<dbReference type="Proteomes" id="UP000001680">
    <property type="component" value="Chromosome 1"/>
</dbReference>
<dbReference type="GO" id="GO:0005694">
    <property type="term" value="C:chromosome"/>
    <property type="evidence" value="ECO:0007669"/>
    <property type="project" value="InterPro"/>
</dbReference>
<dbReference type="GO" id="GO:0005829">
    <property type="term" value="C:cytosol"/>
    <property type="evidence" value="ECO:0007669"/>
    <property type="project" value="TreeGrafter"/>
</dbReference>
<dbReference type="GO" id="GO:0003677">
    <property type="term" value="F:DNA binding"/>
    <property type="evidence" value="ECO:0007669"/>
    <property type="project" value="UniProtKB-UniRule"/>
</dbReference>
<dbReference type="GO" id="GO:0030527">
    <property type="term" value="F:structural constituent of chromatin"/>
    <property type="evidence" value="ECO:0007669"/>
    <property type="project" value="InterPro"/>
</dbReference>
<dbReference type="GO" id="GO:0006310">
    <property type="term" value="P:DNA recombination"/>
    <property type="evidence" value="ECO:0007669"/>
    <property type="project" value="UniProtKB-UniRule"/>
</dbReference>
<dbReference type="GO" id="GO:0006355">
    <property type="term" value="P:regulation of DNA-templated transcription"/>
    <property type="evidence" value="ECO:0007669"/>
    <property type="project" value="UniProtKB-UniRule"/>
</dbReference>
<dbReference type="GO" id="GO:0006417">
    <property type="term" value="P:regulation of translation"/>
    <property type="evidence" value="ECO:0007669"/>
    <property type="project" value="UniProtKB-UniRule"/>
</dbReference>
<dbReference type="CDD" id="cd13836">
    <property type="entry name" value="IHF_B"/>
    <property type="match status" value="1"/>
</dbReference>
<dbReference type="Gene3D" id="4.10.520.10">
    <property type="entry name" value="IHF-like DNA-binding proteins"/>
    <property type="match status" value="1"/>
</dbReference>
<dbReference type="HAMAP" id="MF_00381">
    <property type="entry name" value="IHF_beta"/>
    <property type="match status" value="1"/>
</dbReference>
<dbReference type="InterPro" id="IPR000119">
    <property type="entry name" value="Hist_DNA-bd"/>
</dbReference>
<dbReference type="InterPro" id="IPR010992">
    <property type="entry name" value="IHF-like_DNA-bd_dom_sf"/>
</dbReference>
<dbReference type="InterPro" id="IPR005685">
    <property type="entry name" value="IHF_beta"/>
</dbReference>
<dbReference type="NCBIfam" id="TIGR00988">
    <property type="entry name" value="hip"/>
    <property type="match status" value="1"/>
</dbReference>
<dbReference type="NCBIfam" id="NF001222">
    <property type="entry name" value="PRK00199.1"/>
    <property type="match status" value="1"/>
</dbReference>
<dbReference type="PANTHER" id="PTHR33175">
    <property type="entry name" value="DNA-BINDING PROTEIN HU"/>
    <property type="match status" value="1"/>
</dbReference>
<dbReference type="PANTHER" id="PTHR33175:SF5">
    <property type="entry name" value="INTEGRATION HOST FACTOR SUBUNIT BETA"/>
    <property type="match status" value="1"/>
</dbReference>
<dbReference type="Pfam" id="PF00216">
    <property type="entry name" value="Bac_DNA_binding"/>
    <property type="match status" value="1"/>
</dbReference>
<dbReference type="PRINTS" id="PR01727">
    <property type="entry name" value="DNABINDINGHU"/>
</dbReference>
<dbReference type="SMART" id="SM00411">
    <property type="entry name" value="BHL"/>
    <property type="match status" value="1"/>
</dbReference>
<dbReference type="SUPFAM" id="SSF47729">
    <property type="entry name" value="IHF-like DNA-binding proteins"/>
    <property type="match status" value="1"/>
</dbReference>
<proteinExistence type="inferred from homology"/>
<comment type="function">
    <text evidence="1">This protein is one of the two subunits of integration host factor, a specific DNA-binding protein that functions in genetic recombination as well as in transcriptional and translational control.</text>
</comment>
<comment type="subunit">
    <text evidence="1">Heterodimer of an alpha and a beta chain.</text>
</comment>
<comment type="similarity">
    <text evidence="1">Belongs to the bacterial histone-like protein family.</text>
</comment>
<evidence type="ECO:0000255" key="1">
    <source>
        <dbReference type="HAMAP-Rule" id="MF_00381"/>
    </source>
</evidence>
<evidence type="ECO:0000256" key="2">
    <source>
        <dbReference type="SAM" id="MobiDB-lite"/>
    </source>
</evidence>
<gene>
    <name evidence="1" type="primary">ihfB</name>
    <name evidence="1" type="synonym">himD</name>
    <name type="ordered locus">BamMC406_0928</name>
</gene>
<organism>
    <name type="scientific">Burkholderia ambifaria (strain MC40-6)</name>
    <dbReference type="NCBI Taxonomy" id="398577"/>
    <lineage>
        <taxon>Bacteria</taxon>
        <taxon>Pseudomonadati</taxon>
        <taxon>Pseudomonadota</taxon>
        <taxon>Betaproteobacteria</taxon>
        <taxon>Burkholderiales</taxon>
        <taxon>Burkholderiaceae</taxon>
        <taxon>Burkholderia</taxon>
        <taxon>Burkholderia cepacia complex</taxon>
    </lineage>
</organism>
<protein>
    <recommendedName>
        <fullName evidence="1">Integration host factor subunit beta</fullName>
        <shortName evidence="1">IHF-beta</shortName>
    </recommendedName>
</protein>